<name>TRHO_STRP8</name>
<keyword id="KW-0560">Oxidoreductase</keyword>
<keyword id="KW-0819">tRNA processing</keyword>
<organism>
    <name type="scientific">Streptococcus pyogenes serotype M18 (strain MGAS8232)</name>
    <dbReference type="NCBI Taxonomy" id="186103"/>
    <lineage>
        <taxon>Bacteria</taxon>
        <taxon>Bacillati</taxon>
        <taxon>Bacillota</taxon>
        <taxon>Bacilli</taxon>
        <taxon>Lactobacillales</taxon>
        <taxon>Streptococcaceae</taxon>
        <taxon>Streptococcus</taxon>
    </lineage>
</organism>
<gene>
    <name evidence="1" type="primary">trhO</name>
    <name type="ordered locus">spyM18_0973</name>
</gene>
<comment type="function">
    <text evidence="1">Catalyzes oxygen-dependent 5-hydroxyuridine (ho5U) modification at position 34 in tRNAs.</text>
</comment>
<comment type="catalytic activity">
    <reaction evidence="1">
        <text>uridine(34) in tRNA + AH2 + O2 = 5-hydroxyuridine(34) in tRNA + A + H2O</text>
        <dbReference type="Rhea" id="RHEA:64224"/>
        <dbReference type="Rhea" id="RHEA-COMP:11727"/>
        <dbReference type="Rhea" id="RHEA-COMP:13381"/>
        <dbReference type="ChEBI" id="CHEBI:13193"/>
        <dbReference type="ChEBI" id="CHEBI:15377"/>
        <dbReference type="ChEBI" id="CHEBI:15379"/>
        <dbReference type="ChEBI" id="CHEBI:17499"/>
        <dbReference type="ChEBI" id="CHEBI:65315"/>
        <dbReference type="ChEBI" id="CHEBI:136877"/>
    </reaction>
</comment>
<comment type="similarity">
    <text evidence="1">Belongs to the TrhO family.</text>
</comment>
<accession>P67333</accession>
<accession>Q9A064</accession>
<dbReference type="EC" id="1.14.-.-" evidence="1"/>
<dbReference type="EMBL" id="AE009949">
    <property type="protein sequence ID" value="AAL97614.1"/>
    <property type="molecule type" value="Genomic_DNA"/>
</dbReference>
<dbReference type="RefSeq" id="WP_010922187.1">
    <property type="nucleotide sequence ID" value="NC_003485.1"/>
</dbReference>
<dbReference type="SMR" id="P67333"/>
<dbReference type="KEGG" id="spm:spyM18_0973"/>
<dbReference type="HOGENOM" id="CLU_038878_1_0_9"/>
<dbReference type="GO" id="GO:0016705">
    <property type="term" value="F:oxidoreductase activity, acting on paired donors, with incorporation or reduction of molecular oxygen"/>
    <property type="evidence" value="ECO:0007669"/>
    <property type="project" value="UniProtKB-UniRule"/>
</dbReference>
<dbReference type="GO" id="GO:0006400">
    <property type="term" value="P:tRNA modification"/>
    <property type="evidence" value="ECO:0007669"/>
    <property type="project" value="UniProtKB-UniRule"/>
</dbReference>
<dbReference type="CDD" id="cd01518">
    <property type="entry name" value="RHOD_YceA"/>
    <property type="match status" value="1"/>
</dbReference>
<dbReference type="Gene3D" id="3.30.70.100">
    <property type="match status" value="1"/>
</dbReference>
<dbReference type="Gene3D" id="3.40.250.10">
    <property type="entry name" value="Rhodanese-like domain"/>
    <property type="match status" value="1"/>
</dbReference>
<dbReference type="HAMAP" id="MF_00469">
    <property type="entry name" value="TrhO"/>
    <property type="match status" value="1"/>
</dbReference>
<dbReference type="InterPro" id="IPR001763">
    <property type="entry name" value="Rhodanese-like_dom"/>
</dbReference>
<dbReference type="InterPro" id="IPR036873">
    <property type="entry name" value="Rhodanese-like_dom_sf"/>
</dbReference>
<dbReference type="InterPro" id="IPR022111">
    <property type="entry name" value="Rhodanese_C"/>
</dbReference>
<dbReference type="InterPro" id="IPR020936">
    <property type="entry name" value="TrhO"/>
</dbReference>
<dbReference type="InterPro" id="IPR040503">
    <property type="entry name" value="TRHO_N"/>
</dbReference>
<dbReference type="NCBIfam" id="NF001135">
    <property type="entry name" value="PRK00142.1-3"/>
    <property type="match status" value="1"/>
</dbReference>
<dbReference type="NCBIfam" id="NF001137">
    <property type="entry name" value="PRK00142.1-5"/>
    <property type="match status" value="1"/>
</dbReference>
<dbReference type="PANTHER" id="PTHR43268:SF3">
    <property type="entry name" value="RHODANESE-LIKE DOMAIN-CONTAINING PROTEIN 7-RELATED"/>
    <property type="match status" value="1"/>
</dbReference>
<dbReference type="PANTHER" id="PTHR43268">
    <property type="entry name" value="THIOSULFATE SULFURTRANSFERASE/RHODANESE-LIKE DOMAIN-CONTAINING PROTEIN 2"/>
    <property type="match status" value="1"/>
</dbReference>
<dbReference type="Pfam" id="PF00581">
    <property type="entry name" value="Rhodanese"/>
    <property type="match status" value="1"/>
</dbReference>
<dbReference type="Pfam" id="PF12368">
    <property type="entry name" value="Rhodanese_C"/>
    <property type="match status" value="1"/>
</dbReference>
<dbReference type="Pfam" id="PF17773">
    <property type="entry name" value="UPF0176_N"/>
    <property type="match status" value="1"/>
</dbReference>
<dbReference type="SMART" id="SM00450">
    <property type="entry name" value="RHOD"/>
    <property type="match status" value="1"/>
</dbReference>
<dbReference type="SUPFAM" id="SSF52821">
    <property type="entry name" value="Rhodanese/Cell cycle control phosphatase"/>
    <property type="match status" value="1"/>
</dbReference>
<dbReference type="PROSITE" id="PS50206">
    <property type="entry name" value="RHODANESE_3"/>
    <property type="match status" value="1"/>
</dbReference>
<protein>
    <recommendedName>
        <fullName evidence="1">tRNA uridine(34) hydroxylase</fullName>
        <ecNumber evidence="1">1.14.-.-</ecNumber>
    </recommendedName>
    <alternativeName>
        <fullName evidence="1">tRNA hydroxylation protein O</fullName>
    </alternativeName>
</protein>
<feature type="chain" id="PRO_0000161528" description="tRNA uridine(34) hydroxylase">
    <location>
        <begin position="1"/>
        <end position="328"/>
    </location>
</feature>
<feature type="domain" description="Rhodanese" evidence="1">
    <location>
        <begin position="130"/>
        <end position="224"/>
    </location>
</feature>
<feature type="active site" description="Cysteine persulfide intermediate" evidence="1">
    <location>
        <position position="184"/>
    </location>
</feature>
<sequence length="328" mass="38213">MSEKIRVLLYYKYVSIENAQEYAAKHLEFCKSIGLKGRILIADEGINGTVSGDYETTQKYMDWVHSDERFADLWFKIDEENQQAFRKMFVRYKKEIVHLGLEDNNFDSDINPLETTGEYLNPKQFKEALLDEDTVVLDTRNDYEYDLGHFRGAIRPDIRNFRELPQWVRDNKDKFMEKRVVVYCTGGVRCEKFSGWMVREGFKDVGQLHGGIATYGKDPEVQGELWDGAMYVFDDRISVPINHVNPTVISKDYFDGTPCERYVNCANPFCNKQIFASEENETKYVRGCSPECRAHERNRYVQENGLSRQEWAERLEAIGESLPEFVGA</sequence>
<proteinExistence type="inferred from homology"/>
<reference key="1">
    <citation type="journal article" date="2002" name="Proc. Natl. Acad. Sci. U.S.A.">
        <title>Genome sequence and comparative microarray analysis of serotype M18 group A Streptococcus strains associated with acute rheumatic fever outbreaks.</title>
        <authorList>
            <person name="Smoot J.C."/>
            <person name="Barbian K.D."/>
            <person name="Van Gompel J.J."/>
            <person name="Smoot L.M."/>
            <person name="Chaussee M.S."/>
            <person name="Sylva G.L."/>
            <person name="Sturdevant D.E."/>
            <person name="Ricklefs S.M."/>
            <person name="Porcella S.F."/>
            <person name="Parkins L.D."/>
            <person name="Beres S.B."/>
            <person name="Campbell D.S."/>
            <person name="Smith T.M."/>
            <person name="Zhang Q."/>
            <person name="Kapur V."/>
            <person name="Daly J.A."/>
            <person name="Veasy L.G."/>
            <person name="Musser J.M."/>
        </authorList>
    </citation>
    <scope>NUCLEOTIDE SEQUENCE [LARGE SCALE GENOMIC DNA]</scope>
    <source>
        <strain>MGAS8232</strain>
    </source>
</reference>
<evidence type="ECO:0000255" key="1">
    <source>
        <dbReference type="HAMAP-Rule" id="MF_00469"/>
    </source>
</evidence>